<keyword id="KW-0997">Cell inner membrane</keyword>
<keyword id="KW-1003">Cell membrane</keyword>
<keyword id="KW-0133">Cell shape</keyword>
<keyword id="KW-0961">Cell wall biogenesis/degradation</keyword>
<keyword id="KW-0328">Glycosyltransferase</keyword>
<keyword id="KW-0472">Membrane</keyword>
<keyword id="KW-0573">Peptidoglycan synthesis</keyword>
<keyword id="KW-0808">Transferase</keyword>
<keyword id="KW-0812">Transmembrane</keyword>
<keyword id="KW-1133">Transmembrane helix</keyword>
<reference key="1">
    <citation type="journal article" date="2007" name="Environ. Microbiol.">
        <title>Whole-genome analysis of the ammonia-oxidizing bacterium, Nitrosomonas eutropha C91: implications for niche adaptation.</title>
        <authorList>
            <person name="Stein L.Y."/>
            <person name="Arp D.J."/>
            <person name="Berube P.M."/>
            <person name="Chain P.S."/>
            <person name="Hauser L."/>
            <person name="Jetten M.S."/>
            <person name="Klotz M.G."/>
            <person name="Larimer F.W."/>
            <person name="Norton J.M."/>
            <person name="Op den Camp H.J.M."/>
            <person name="Shin M."/>
            <person name="Wei X."/>
        </authorList>
    </citation>
    <scope>NUCLEOTIDE SEQUENCE [LARGE SCALE GENOMIC DNA]</scope>
    <source>
        <strain>DSM 101675 / C91 / Nm57</strain>
    </source>
</reference>
<sequence>MKLTKTSRPTTPQPGLISTWLLRPLLLLLAIALLYQSWFLLHIIYWRTYHPTTSAFMQDRLETMHRQNPAAKLQHRWVDYEQISNHLKRAVIATEDARFMQHQGFDYKAIEVAWKKNLKQRKLAAGGSTISQQLAKNLFLSSEKTVWRKLQETLITLILEEFLSKRRILEIYLNVIEWGEGVFGIEAAARHYFGIPASSLAPEQSAWLASIISNPRFYDTHRQSPRLLKKARIILSRLPTAKIP</sequence>
<comment type="function">
    <text evidence="1">Peptidoglycan polymerase that catalyzes glycan chain elongation from lipid-linked precursors.</text>
</comment>
<comment type="catalytic activity">
    <reaction evidence="1">
        <text>[GlcNAc-(1-&gt;4)-Mur2Ac(oyl-L-Ala-gamma-D-Glu-L-Lys-D-Ala-D-Ala)](n)-di-trans,octa-cis-undecaprenyl diphosphate + beta-D-GlcNAc-(1-&gt;4)-Mur2Ac(oyl-L-Ala-gamma-D-Glu-L-Lys-D-Ala-D-Ala)-di-trans,octa-cis-undecaprenyl diphosphate = [GlcNAc-(1-&gt;4)-Mur2Ac(oyl-L-Ala-gamma-D-Glu-L-Lys-D-Ala-D-Ala)](n+1)-di-trans,octa-cis-undecaprenyl diphosphate + di-trans,octa-cis-undecaprenyl diphosphate + H(+)</text>
        <dbReference type="Rhea" id="RHEA:23708"/>
        <dbReference type="Rhea" id="RHEA-COMP:9602"/>
        <dbReference type="Rhea" id="RHEA-COMP:9603"/>
        <dbReference type="ChEBI" id="CHEBI:15378"/>
        <dbReference type="ChEBI" id="CHEBI:58405"/>
        <dbReference type="ChEBI" id="CHEBI:60033"/>
        <dbReference type="ChEBI" id="CHEBI:78435"/>
        <dbReference type="EC" id="2.4.99.28"/>
    </reaction>
</comment>
<comment type="pathway">
    <text evidence="1">Cell wall biogenesis; peptidoglycan biosynthesis.</text>
</comment>
<comment type="subcellular location">
    <subcellularLocation>
        <location evidence="1">Cell inner membrane</location>
        <topology evidence="1">Single-pass membrane protein</topology>
    </subcellularLocation>
</comment>
<comment type="similarity">
    <text evidence="1">Belongs to the glycosyltransferase 51 family.</text>
</comment>
<feature type="chain" id="PRO_1000017310" description="Biosynthetic peptidoglycan transglycosylase">
    <location>
        <begin position="1"/>
        <end position="244"/>
    </location>
</feature>
<feature type="transmembrane region" description="Helical" evidence="1">
    <location>
        <begin position="25"/>
        <end position="45"/>
    </location>
</feature>
<dbReference type="EC" id="2.4.99.28" evidence="1"/>
<dbReference type="EMBL" id="CP000450">
    <property type="protein sequence ID" value="ABI58771.1"/>
    <property type="molecule type" value="Genomic_DNA"/>
</dbReference>
<dbReference type="RefSeq" id="WP_011633613.1">
    <property type="nucleotide sequence ID" value="NC_008344.1"/>
</dbReference>
<dbReference type="SMR" id="Q0AIQ0"/>
<dbReference type="STRING" id="335283.Neut_0495"/>
<dbReference type="CAZy" id="GT51">
    <property type="family name" value="Glycosyltransferase Family 51"/>
</dbReference>
<dbReference type="KEGG" id="net:Neut_0495"/>
<dbReference type="eggNOG" id="COG0744">
    <property type="taxonomic scope" value="Bacteria"/>
</dbReference>
<dbReference type="HOGENOM" id="CLU_006354_1_0_4"/>
<dbReference type="OrthoDB" id="9766909at2"/>
<dbReference type="UniPathway" id="UPA00219"/>
<dbReference type="Proteomes" id="UP000001966">
    <property type="component" value="Chromosome"/>
</dbReference>
<dbReference type="GO" id="GO:0009274">
    <property type="term" value="C:peptidoglycan-based cell wall"/>
    <property type="evidence" value="ECO:0007669"/>
    <property type="project" value="InterPro"/>
</dbReference>
<dbReference type="GO" id="GO:0005886">
    <property type="term" value="C:plasma membrane"/>
    <property type="evidence" value="ECO:0007669"/>
    <property type="project" value="UniProtKB-SubCell"/>
</dbReference>
<dbReference type="GO" id="GO:0016763">
    <property type="term" value="F:pentosyltransferase activity"/>
    <property type="evidence" value="ECO:0007669"/>
    <property type="project" value="InterPro"/>
</dbReference>
<dbReference type="GO" id="GO:0008955">
    <property type="term" value="F:peptidoglycan glycosyltransferase activity"/>
    <property type="evidence" value="ECO:0007669"/>
    <property type="project" value="UniProtKB-UniRule"/>
</dbReference>
<dbReference type="GO" id="GO:0071555">
    <property type="term" value="P:cell wall organization"/>
    <property type="evidence" value="ECO:0007669"/>
    <property type="project" value="UniProtKB-KW"/>
</dbReference>
<dbReference type="GO" id="GO:0009252">
    <property type="term" value="P:peptidoglycan biosynthetic process"/>
    <property type="evidence" value="ECO:0007669"/>
    <property type="project" value="UniProtKB-UniRule"/>
</dbReference>
<dbReference type="GO" id="GO:0008360">
    <property type="term" value="P:regulation of cell shape"/>
    <property type="evidence" value="ECO:0007669"/>
    <property type="project" value="UniProtKB-KW"/>
</dbReference>
<dbReference type="Gene3D" id="1.10.3810.10">
    <property type="entry name" value="Biosynthetic peptidoglycan transglycosylase-like"/>
    <property type="match status" value="1"/>
</dbReference>
<dbReference type="HAMAP" id="MF_00766">
    <property type="entry name" value="PGT_MtgA"/>
    <property type="match status" value="1"/>
</dbReference>
<dbReference type="InterPro" id="IPR001264">
    <property type="entry name" value="Glyco_trans_51"/>
</dbReference>
<dbReference type="InterPro" id="IPR023346">
    <property type="entry name" value="Lysozyme-like_dom_sf"/>
</dbReference>
<dbReference type="InterPro" id="IPR036950">
    <property type="entry name" value="PBP_transglycosylase"/>
</dbReference>
<dbReference type="InterPro" id="IPR011812">
    <property type="entry name" value="Pep_trsgly"/>
</dbReference>
<dbReference type="NCBIfam" id="TIGR02070">
    <property type="entry name" value="mono_pep_trsgly"/>
    <property type="match status" value="1"/>
</dbReference>
<dbReference type="PANTHER" id="PTHR30400:SF0">
    <property type="entry name" value="BIOSYNTHETIC PEPTIDOGLYCAN TRANSGLYCOSYLASE"/>
    <property type="match status" value="1"/>
</dbReference>
<dbReference type="PANTHER" id="PTHR30400">
    <property type="entry name" value="MONOFUNCTIONAL BIOSYNTHETIC PEPTIDOGLYCAN TRANSGLYCOSYLASE"/>
    <property type="match status" value="1"/>
</dbReference>
<dbReference type="Pfam" id="PF00912">
    <property type="entry name" value="Transgly"/>
    <property type="match status" value="1"/>
</dbReference>
<dbReference type="SUPFAM" id="SSF53955">
    <property type="entry name" value="Lysozyme-like"/>
    <property type="match status" value="1"/>
</dbReference>
<organism>
    <name type="scientific">Nitrosomonas eutropha (strain DSM 101675 / C91 / Nm57)</name>
    <dbReference type="NCBI Taxonomy" id="335283"/>
    <lineage>
        <taxon>Bacteria</taxon>
        <taxon>Pseudomonadati</taxon>
        <taxon>Pseudomonadota</taxon>
        <taxon>Betaproteobacteria</taxon>
        <taxon>Nitrosomonadales</taxon>
        <taxon>Nitrosomonadaceae</taxon>
        <taxon>Nitrosomonas</taxon>
    </lineage>
</organism>
<protein>
    <recommendedName>
        <fullName evidence="1">Biosynthetic peptidoglycan transglycosylase</fullName>
        <ecNumber evidence="1">2.4.99.28</ecNumber>
    </recommendedName>
    <alternativeName>
        <fullName evidence="1">Glycan polymerase</fullName>
    </alternativeName>
    <alternativeName>
        <fullName evidence="1">Peptidoglycan glycosyltransferase MtgA</fullName>
        <shortName evidence="1">PGT</shortName>
    </alternativeName>
</protein>
<evidence type="ECO:0000255" key="1">
    <source>
        <dbReference type="HAMAP-Rule" id="MF_00766"/>
    </source>
</evidence>
<gene>
    <name evidence="1" type="primary">mtgA</name>
    <name type="ordered locus">Neut_0495</name>
</gene>
<name>MTGA_NITEC</name>
<proteinExistence type="inferred from homology"/>
<accession>Q0AIQ0</accession>